<evidence type="ECO:0000250" key="1">
    <source>
        <dbReference type="UniProtKB" id="Q6NQ88"/>
    </source>
</evidence>
<evidence type="ECO:0000250" key="2">
    <source>
        <dbReference type="UniProtKB" id="Q92466"/>
    </source>
</evidence>
<evidence type="ECO:0000255" key="3"/>
<evidence type="ECO:0000256" key="4">
    <source>
        <dbReference type="SAM" id="MobiDB-lite"/>
    </source>
</evidence>
<evidence type="ECO:0000269" key="5">
    <source>
    </source>
</evidence>
<evidence type="ECO:0000303" key="6">
    <source>
    </source>
</evidence>
<evidence type="ECO:0000303" key="7">
    <source>
    </source>
</evidence>
<evidence type="ECO:0000305" key="8"/>
<evidence type="ECO:0000305" key="9">
    <source>
    </source>
</evidence>
<evidence type="ECO:0000312" key="10">
    <source>
        <dbReference type="EMBL" id="BAB16450.1"/>
    </source>
</evidence>
<evidence type="ECO:0000312" key="11">
    <source>
        <dbReference type="EMBL" id="BAF03899.1"/>
    </source>
</evidence>
<evidence type="ECO:0000312" key="12">
    <source>
        <dbReference type="EMBL" id="EEE53842.1"/>
    </source>
</evidence>
<comment type="function">
    <text evidence="2 9">Required for DNA repair. Binds to DDB1 to form the UV-damaged DNA-binding protein complex (the UV-DDB complex). The UV-DDB complex may recognize UV-induced DNA damage and recruit proteins of the nucleotide excision repair pathway (the NER pathway) to initiate DNA repair (Probable). May function as the substrate recognition module for a DCX (DDB1-CUL4-X-box) E3 ubiquitin-protein ligase complex (By similarity).</text>
</comment>
<comment type="subunit">
    <text evidence="5">Component of the UV-DDB complex, which is composed of DDB1 and DDB2.</text>
</comment>
<comment type="subcellular location">
    <subcellularLocation>
        <location evidence="1">Nucleus</location>
    </subcellularLocation>
</comment>
<comment type="alternative products">
    <event type="alternative splicing"/>
    <isoform>
        <id>Q84KJ3-1</id>
        <name>1</name>
        <sequence type="displayed"/>
    </isoform>
    <isoform>
        <id>Q84KJ3-2</id>
        <name>2</name>
        <sequence type="described" ref="VSP_058626"/>
    </isoform>
</comment>
<comment type="tissue specificity">
    <text evidence="5">Expressed in proliferating tissues such as shoot apical meristem (SAM), root tips and young leaves. Not detected in mature leaves.</text>
</comment>
<comment type="similarity">
    <text evidence="8">Belongs to the WD repeat DDB2/WDR76 family.</text>
</comment>
<proteinExistence type="evidence at protein level"/>
<accession>Q84KJ3</accession>
<accession>Q9FU94</accession>
<gene>
    <name evidence="8" type="primary">DDB2</name>
    <name evidence="11" type="ordered locus">Os01g0141700</name>
    <name evidence="8" type="ordered locus">LOC_Os01g04870</name>
    <name evidence="12" type="ORF">OsJ_00319</name>
    <name evidence="10" type="ORF">P0019D06.8</name>
</gene>
<reference key="1">
    <citation type="journal article" date="2003" name="Gene">
        <title>Rice UV-damaged DNA binding protein homologues are most abundant in proliferating tissues.</title>
        <authorList>
            <person name="Ishibashi T."/>
            <person name="Kimura S."/>
            <person name="Yamamoto T."/>
            <person name="Furukawa T."/>
            <person name="Takata K."/>
            <person name="Uchiyama Y."/>
            <person name="Hashimoto J."/>
            <person name="Sakaguchi K."/>
        </authorList>
    </citation>
    <scope>NUCLEOTIDE SEQUENCE [MRNA] (ISOFORM 1)</scope>
    <scope>FUNCTION</scope>
    <scope>INTERACTION WITH DDB1</scope>
    <scope>TISSUE SPECIFICITY</scope>
    <source>
        <strain>cv. Nipponbare</strain>
    </source>
</reference>
<reference key="2">
    <citation type="journal article" date="2002" name="Nature">
        <title>The genome sequence and structure of rice chromosome 1.</title>
        <authorList>
            <person name="Sasaki T."/>
            <person name="Matsumoto T."/>
            <person name="Yamamoto K."/>
            <person name="Sakata K."/>
            <person name="Baba T."/>
            <person name="Katayose Y."/>
            <person name="Wu J."/>
            <person name="Niimura Y."/>
            <person name="Cheng Z."/>
            <person name="Nagamura Y."/>
            <person name="Antonio B.A."/>
            <person name="Kanamori H."/>
            <person name="Hosokawa S."/>
            <person name="Masukawa M."/>
            <person name="Arikawa K."/>
            <person name="Chiden Y."/>
            <person name="Hayashi M."/>
            <person name="Okamoto M."/>
            <person name="Ando T."/>
            <person name="Aoki H."/>
            <person name="Arita K."/>
            <person name="Hamada M."/>
            <person name="Harada C."/>
            <person name="Hijishita S."/>
            <person name="Honda M."/>
            <person name="Ichikawa Y."/>
            <person name="Idonuma A."/>
            <person name="Iijima M."/>
            <person name="Ikeda M."/>
            <person name="Ikeno M."/>
            <person name="Ito S."/>
            <person name="Ito T."/>
            <person name="Ito Y."/>
            <person name="Ito Y."/>
            <person name="Iwabuchi A."/>
            <person name="Kamiya K."/>
            <person name="Karasawa W."/>
            <person name="Katagiri S."/>
            <person name="Kikuta A."/>
            <person name="Kobayashi N."/>
            <person name="Kono I."/>
            <person name="Machita K."/>
            <person name="Maehara T."/>
            <person name="Mizuno H."/>
            <person name="Mizubayashi T."/>
            <person name="Mukai Y."/>
            <person name="Nagasaki H."/>
            <person name="Nakashima M."/>
            <person name="Nakama Y."/>
            <person name="Nakamichi Y."/>
            <person name="Nakamura M."/>
            <person name="Namiki N."/>
            <person name="Negishi M."/>
            <person name="Ohta I."/>
            <person name="Ono N."/>
            <person name="Saji S."/>
            <person name="Sakai K."/>
            <person name="Shibata M."/>
            <person name="Shimokawa T."/>
            <person name="Shomura A."/>
            <person name="Song J."/>
            <person name="Takazaki Y."/>
            <person name="Terasawa K."/>
            <person name="Tsuji K."/>
            <person name="Waki K."/>
            <person name="Yamagata H."/>
            <person name="Yamane H."/>
            <person name="Yoshiki S."/>
            <person name="Yoshihara R."/>
            <person name="Yukawa K."/>
            <person name="Zhong H."/>
            <person name="Iwama H."/>
            <person name="Endo T."/>
            <person name="Ito H."/>
            <person name="Hahn J.H."/>
            <person name="Kim H.-I."/>
            <person name="Eun M.-Y."/>
            <person name="Yano M."/>
            <person name="Jiang J."/>
            <person name="Gojobori T."/>
        </authorList>
    </citation>
    <scope>NUCLEOTIDE SEQUENCE [LARGE SCALE GENOMIC DNA]</scope>
    <source>
        <strain>cv. Nipponbare</strain>
    </source>
</reference>
<reference key="3">
    <citation type="journal article" date="2005" name="Nature">
        <title>The map-based sequence of the rice genome.</title>
        <authorList>
            <consortium name="International rice genome sequencing project (IRGSP)"/>
        </authorList>
    </citation>
    <scope>NUCLEOTIDE SEQUENCE [LARGE SCALE GENOMIC DNA]</scope>
    <source>
        <strain>cv. Nipponbare</strain>
    </source>
</reference>
<reference key="4">
    <citation type="journal article" date="2008" name="Nucleic Acids Res.">
        <title>The rice annotation project database (RAP-DB): 2008 update.</title>
        <authorList>
            <consortium name="The rice annotation project (RAP)"/>
        </authorList>
    </citation>
    <scope>GENOME REANNOTATION</scope>
    <source>
        <strain>cv. Nipponbare</strain>
    </source>
</reference>
<reference key="5">
    <citation type="journal article" date="2013" name="Rice">
        <title>Improvement of the Oryza sativa Nipponbare reference genome using next generation sequence and optical map data.</title>
        <authorList>
            <person name="Kawahara Y."/>
            <person name="de la Bastide M."/>
            <person name="Hamilton J.P."/>
            <person name="Kanamori H."/>
            <person name="McCombie W.R."/>
            <person name="Ouyang S."/>
            <person name="Schwartz D.C."/>
            <person name="Tanaka T."/>
            <person name="Wu J."/>
            <person name="Zhou S."/>
            <person name="Childs K.L."/>
            <person name="Davidson R.M."/>
            <person name="Lin H."/>
            <person name="Quesada-Ocampo L."/>
            <person name="Vaillancourt B."/>
            <person name="Sakai H."/>
            <person name="Lee S.S."/>
            <person name="Kim J."/>
            <person name="Numa H."/>
            <person name="Itoh T."/>
            <person name="Buell C.R."/>
            <person name="Matsumoto T."/>
        </authorList>
    </citation>
    <scope>GENOME REANNOTATION</scope>
    <source>
        <strain>cv. Nipponbare</strain>
    </source>
</reference>
<reference key="6">
    <citation type="journal article" date="2005" name="PLoS Biol.">
        <title>The genomes of Oryza sativa: a history of duplications.</title>
        <authorList>
            <person name="Yu J."/>
            <person name="Wang J."/>
            <person name="Lin W."/>
            <person name="Li S."/>
            <person name="Li H."/>
            <person name="Zhou J."/>
            <person name="Ni P."/>
            <person name="Dong W."/>
            <person name="Hu S."/>
            <person name="Zeng C."/>
            <person name="Zhang J."/>
            <person name="Zhang Y."/>
            <person name="Li R."/>
            <person name="Xu Z."/>
            <person name="Li S."/>
            <person name="Li X."/>
            <person name="Zheng H."/>
            <person name="Cong L."/>
            <person name="Lin L."/>
            <person name="Yin J."/>
            <person name="Geng J."/>
            <person name="Li G."/>
            <person name="Shi J."/>
            <person name="Liu J."/>
            <person name="Lv H."/>
            <person name="Li J."/>
            <person name="Wang J."/>
            <person name="Deng Y."/>
            <person name="Ran L."/>
            <person name="Shi X."/>
            <person name="Wang X."/>
            <person name="Wu Q."/>
            <person name="Li C."/>
            <person name="Ren X."/>
            <person name="Wang J."/>
            <person name="Wang X."/>
            <person name="Li D."/>
            <person name="Liu D."/>
            <person name="Zhang X."/>
            <person name="Ji Z."/>
            <person name="Zhao W."/>
            <person name="Sun Y."/>
            <person name="Zhang Z."/>
            <person name="Bao J."/>
            <person name="Han Y."/>
            <person name="Dong L."/>
            <person name="Ji J."/>
            <person name="Chen P."/>
            <person name="Wu S."/>
            <person name="Liu J."/>
            <person name="Xiao Y."/>
            <person name="Bu D."/>
            <person name="Tan J."/>
            <person name="Yang L."/>
            <person name="Ye C."/>
            <person name="Zhang J."/>
            <person name="Xu J."/>
            <person name="Zhou Y."/>
            <person name="Yu Y."/>
            <person name="Zhang B."/>
            <person name="Zhuang S."/>
            <person name="Wei H."/>
            <person name="Liu B."/>
            <person name="Lei M."/>
            <person name="Yu H."/>
            <person name="Li Y."/>
            <person name="Xu H."/>
            <person name="Wei S."/>
            <person name="He X."/>
            <person name="Fang L."/>
            <person name="Zhang Z."/>
            <person name="Zhang Y."/>
            <person name="Huang X."/>
            <person name="Su Z."/>
            <person name="Tong W."/>
            <person name="Li J."/>
            <person name="Tong Z."/>
            <person name="Li S."/>
            <person name="Ye J."/>
            <person name="Wang L."/>
            <person name="Fang L."/>
            <person name="Lei T."/>
            <person name="Chen C.-S."/>
            <person name="Chen H.-C."/>
            <person name="Xu Z."/>
            <person name="Li H."/>
            <person name="Huang H."/>
            <person name="Zhang F."/>
            <person name="Xu H."/>
            <person name="Li N."/>
            <person name="Zhao C."/>
            <person name="Li S."/>
            <person name="Dong L."/>
            <person name="Huang Y."/>
            <person name="Li L."/>
            <person name="Xi Y."/>
            <person name="Qi Q."/>
            <person name="Li W."/>
            <person name="Zhang B."/>
            <person name="Hu W."/>
            <person name="Zhang Y."/>
            <person name="Tian X."/>
            <person name="Jiao Y."/>
            <person name="Liang X."/>
            <person name="Jin J."/>
            <person name="Gao L."/>
            <person name="Zheng W."/>
            <person name="Hao B."/>
            <person name="Liu S.-M."/>
            <person name="Wang W."/>
            <person name="Yuan L."/>
            <person name="Cao M."/>
            <person name="McDermott J."/>
            <person name="Samudrala R."/>
            <person name="Wang J."/>
            <person name="Wong G.K.-S."/>
            <person name="Yang H."/>
        </authorList>
    </citation>
    <scope>NUCLEOTIDE SEQUENCE [LARGE SCALE GENOMIC DNA]</scope>
    <source>
        <strain>cv. Nipponbare</strain>
    </source>
</reference>
<reference key="7">
    <citation type="journal article" date="2003" name="Science">
        <title>Collection, mapping, and annotation of over 28,000 cDNA clones from japonica rice.</title>
        <authorList>
            <consortium name="The rice full-length cDNA consortium"/>
        </authorList>
    </citation>
    <scope>NUCLEOTIDE SEQUENCE [LARGE SCALE MRNA] (ISOFORM 2)</scope>
    <source>
        <strain>cv. Nipponbare</strain>
    </source>
</reference>
<reference key="8">
    <citation type="journal article" date="2012" name="BMC Genomics">
        <title>Genomic survey, expression profile and co-expression network analysis of OsWD40 family in rice.</title>
        <authorList>
            <person name="Ouyang Y."/>
            <person name="Huang X."/>
            <person name="Lu Z."/>
            <person name="Yao J."/>
        </authorList>
    </citation>
    <scope>GENE FAMILY</scope>
    <scope>NOMENCLATURE</scope>
</reference>
<keyword id="KW-0025">Alternative splicing</keyword>
<keyword id="KW-0227">DNA damage</keyword>
<keyword id="KW-0234">DNA repair</keyword>
<keyword id="KW-0238">DNA-binding</keyword>
<keyword id="KW-0479">Metal-binding</keyword>
<keyword id="KW-0539">Nucleus</keyword>
<keyword id="KW-1185">Reference proteome</keyword>
<keyword id="KW-0677">Repeat</keyword>
<keyword id="KW-0833">Ubl conjugation pathway</keyword>
<keyword id="KW-0853">WD repeat</keyword>
<keyword id="KW-0862">Zinc</keyword>
<keyword id="KW-0863">Zinc-finger</keyword>
<feature type="chain" id="PRO_0000438215" description="DNA damage-binding protein 2">
    <location>
        <begin position="1"/>
        <end position="584"/>
    </location>
</feature>
<feature type="repeat" description="WD 1" evidence="3">
    <location>
        <begin position="192"/>
        <end position="232"/>
    </location>
</feature>
<feature type="repeat" description="WD 2" evidence="3">
    <location>
        <begin position="236"/>
        <end position="278"/>
    </location>
</feature>
<feature type="repeat" description="WD 3" evidence="3">
    <location>
        <begin position="288"/>
        <end position="327"/>
    </location>
</feature>
<feature type="repeat" description="WD 4" evidence="3">
    <location>
        <begin position="333"/>
        <end position="373"/>
    </location>
</feature>
<feature type="repeat" description="WD 5" evidence="3">
    <location>
        <begin position="378"/>
        <end position="418"/>
    </location>
</feature>
<feature type="repeat" description="WD 6" evidence="3">
    <location>
        <begin position="438"/>
        <end position="481"/>
    </location>
</feature>
<feature type="repeat" description="WD 7" evidence="3">
    <location>
        <begin position="484"/>
        <end position="523"/>
    </location>
</feature>
<feature type="zinc finger region" description="CCHC-type" evidence="3">
    <location>
        <begin position="122"/>
        <end position="140"/>
    </location>
</feature>
<feature type="region of interest" description="Disordered" evidence="4">
    <location>
        <begin position="1"/>
        <end position="87"/>
    </location>
</feature>
<feature type="region of interest" description="Disordered" evidence="4">
    <location>
        <begin position="517"/>
        <end position="584"/>
    </location>
</feature>
<feature type="short sequence motif" description="DWD box" evidence="1">
    <location>
        <begin position="351"/>
        <end position="366"/>
    </location>
</feature>
<feature type="compositionally biased region" description="Basic residues" evidence="4">
    <location>
        <begin position="8"/>
        <end position="20"/>
    </location>
</feature>
<feature type="compositionally biased region" description="Acidic residues" evidence="4">
    <location>
        <begin position="25"/>
        <end position="35"/>
    </location>
</feature>
<feature type="compositionally biased region" description="Acidic residues" evidence="4">
    <location>
        <begin position="45"/>
        <end position="66"/>
    </location>
</feature>
<feature type="compositionally biased region" description="Basic and acidic residues" evidence="4">
    <location>
        <begin position="517"/>
        <end position="532"/>
    </location>
</feature>
<feature type="compositionally biased region" description="Basic residues" evidence="4">
    <location>
        <begin position="562"/>
        <end position="584"/>
    </location>
</feature>
<feature type="splice variant" id="VSP_058626" description="In isoform 2.">
    <location>
        <position position="131"/>
    </location>
</feature>
<organism>
    <name type="scientific">Oryza sativa subsp. japonica</name>
    <name type="common">Rice</name>
    <dbReference type="NCBI Taxonomy" id="39947"/>
    <lineage>
        <taxon>Eukaryota</taxon>
        <taxon>Viridiplantae</taxon>
        <taxon>Streptophyta</taxon>
        <taxon>Embryophyta</taxon>
        <taxon>Tracheophyta</taxon>
        <taxon>Spermatophyta</taxon>
        <taxon>Magnoliopsida</taxon>
        <taxon>Liliopsida</taxon>
        <taxon>Poales</taxon>
        <taxon>Poaceae</taxon>
        <taxon>BOP clade</taxon>
        <taxon>Oryzoideae</taxon>
        <taxon>Oryzeae</taxon>
        <taxon>Oryzinae</taxon>
        <taxon>Oryza</taxon>
        <taxon>Oryza sativa</taxon>
    </lineage>
</organism>
<protein>
    <recommendedName>
        <fullName evidence="8">DNA damage-binding protein 2</fullName>
    </recommendedName>
    <alternativeName>
        <fullName evidence="8">UV-damaged DNA-binding protein 2</fullName>
        <shortName evidence="6">OsUV-DDB2</shortName>
    </alternativeName>
    <alternativeName>
        <fullName evidence="8">WD40 repeat-containing protein 2</fullName>
        <shortName evidence="7">OsWD40-2</shortName>
    </alternativeName>
</protein>
<sequence>MGPTTRARFVHNRRRRRRRGPYAAPDDDDEEEDQQEASSSSSSSDEGEEDAEEEGSGEVDDDDGEAAEPSGKEEEVSPVAAAARSGRKASITISLKKVCKVCKSTGHEAGFKGAVYIDCPRKPCFLCKMPGGHTTLTCPHRVAMEHGVIPASRRNTNTSLDYVFQSQVKGKIPMVKPQFLIPNQLECGNIKFHQRRVTCLEFHPTKNNVLLSGDKKGLLGVWDYVKLHEKITYDSVHSCILNSMKFDTTNDGLLYTASSDGTISSTDLDTGIGSSLLNLNPNGWNGPSTWRMIYGMDFNSDKGLLLVADSFGFLHLLDRRLKARIGDPILIHKKGSKVTSLHCNPAQPEVLLSSGNDHYARIWDTRKLEPNSAFVSLAHGRVVNSGYFSPQSGNKILTTCQDNRIRVWDYIFGNLESPSREIVHSHDFNRHLTPFKAEWDPKDHTETVAVIGRYISENYNGIALHPIDFIDTSTGKLLAEVMDPDITTISPVNKLHPRDDILASGSSRSIFIWKPKTESDATEERNREKAKEFVYGSGSRKKSNGKHENSSDDDSDGSCDGKKKKKAKKTRFTHTIKGKGKSKV</sequence>
<dbReference type="EMBL" id="AB082381">
    <property type="protein sequence ID" value="BAC75824.1"/>
    <property type="molecule type" value="mRNA"/>
</dbReference>
<dbReference type="EMBL" id="AP002483">
    <property type="protein sequence ID" value="BAB16450.1"/>
    <property type="molecule type" value="Genomic_DNA"/>
</dbReference>
<dbReference type="EMBL" id="AP008207">
    <property type="protein sequence ID" value="BAF03899.1"/>
    <property type="molecule type" value="Genomic_DNA"/>
</dbReference>
<dbReference type="EMBL" id="AP014957">
    <property type="protein sequence ID" value="BAS70324.1"/>
    <property type="molecule type" value="Genomic_DNA"/>
</dbReference>
<dbReference type="EMBL" id="CM000138">
    <property type="protein sequence ID" value="EEE53842.1"/>
    <property type="molecule type" value="Genomic_DNA"/>
</dbReference>
<dbReference type="EMBL" id="AK111907">
    <property type="protein sequence ID" value="BAG99473.1"/>
    <property type="molecule type" value="mRNA"/>
</dbReference>
<dbReference type="EMBL" id="AK112097">
    <property type="protein sequence ID" value="BAG99549.1"/>
    <property type="molecule type" value="mRNA"/>
</dbReference>
<dbReference type="RefSeq" id="XP_015622245.1">
    <molecule id="Q84KJ3-2"/>
    <property type="nucleotide sequence ID" value="XM_015766759.1"/>
</dbReference>
<dbReference type="SMR" id="Q84KJ3"/>
<dbReference type="FunCoup" id="Q84KJ3">
    <property type="interactions" value="802"/>
</dbReference>
<dbReference type="STRING" id="39947.Q84KJ3"/>
<dbReference type="PaxDb" id="39947-Q84KJ3"/>
<dbReference type="GeneID" id="4325482"/>
<dbReference type="KEGG" id="dosa:Os01g0141700"/>
<dbReference type="KEGG" id="osa:4325482"/>
<dbReference type="eggNOG" id="KOG4328">
    <property type="taxonomic scope" value="Eukaryota"/>
</dbReference>
<dbReference type="InParanoid" id="Q84KJ3"/>
<dbReference type="OMA" id="DSIFGNM"/>
<dbReference type="OrthoDB" id="9890280at2759"/>
<dbReference type="Proteomes" id="UP000000763">
    <property type="component" value="Chromosome 1"/>
</dbReference>
<dbReference type="Proteomes" id="UP000007752">
    <property type="component" value="Chromosome 1"/>
</dbReference>
<dbReference type="Proteomes" id="UP000059680">
    <property type="component" value="Chromosome 1"/>
</dbReference>
<dbReference type="GO" id="GO:0080008">
    <property type="term" value="C:Cul4-RING E3 ubiquitin ligase complex"/>
    <property type="evidence" value="ECO:0007669"/>
    <property type="project" value="InterPro"/>
</dbReference>
<dbReference type="GO" id="GO:0005634">
    <property type="term" value="C:nucleus"/>
    <property type="evidence" value="ECO:0000318"/>
    <property type="project" value="GO_Central"/>
</dbReference>
<dbReference type="GO" id="GO:0003684">
    <property type="term" value="F:damaged DNA binding"/>
    <property type="evidence" value="ECO:0000314"/>
    <property type="project" value="UniProtKB"/>
</dbReference>
<dbReference type="GO" id="GO:0008270">
    <property type="term" value="F:zinc ion binding"/>
    <property type="evidence" value="ECO:0007669"/>
    <property type="project" value="UniProtKB-KW"/>
</dbReference>
<dbReference type="GO" id="GO:0006281">
    <property type="term" value="P:DNA repair"/>
    <property type="evidence" value="ECO:0000318"/>
    <property type="project" value="GO_Central"/>
</dbReference>
<dbReference type="GO" id="GO:0009411">
    <property type="term" value="P:response to UV"/>
    <property type="evidence" value="ECO:0000318"/>
    <property type="project" value="GO_Central"/>
</dbReference>
<dbReference type="FunFam" id="2.130.10.10:FF:000408">
    <property type="entry name" value="protein DAMAGED DNA-BINDING 2"/>
    <property type="match status" value="1"/>
</dbReference>
<dbReference type="Gene3D" id="2.130.10.10">
    <property type="entry name" value="YVTN repeat-like/Quinoprotein amine dehydrogenase"/>
    <property type="match status" value="1"/>
</dbReference>
<dbReference type="InterPro" id="IPR033312">
    <property type="entry name" value="DDB2"/>
</dbReference>
<dbReference type="InterPro" id="IPR015943">
    <property type="entry name" value="WD40/YVTN_repeat-like_dom_sf"/>
</dbReference>
<dbReference type="InterPro" id="IPR019775">
    <property type="entry name" value="WD40_repeat_CS"/>
</dbReference>
<dbReference type="InterPro" id="IPR036322">
    <property type="entry name" value="WD40_repeat_dom_sf"/>
</dbReference>
<dbReference type="InterPro" id="IPR001680">
    <property type="entry name" value="WD40_rpt"/>
</dbReference>
<dbReference type="PANTHER" id="PTHR15169">
    <property type="entry name" value="DAMAGE-SPECIFIC DNA BINDING PROTEIN 2"/>
    <property type="match status" value="1"/>
</dbReference>
<dbReference type="PANTHER" id="PTHR15169:SF0">
    <property type="entry name" value="DNA DAMAGE-BINDING PROTEIN 2"/>
    <property type="match status" value="1"/>
</dbReference>
<dbReference type="Pfam" id="PF00400">
    <property type="entry name" value="WD40"/>
    <property type="match status" value="3"/>
</dbReference>
<dbReference type="SMART" id="SM00320">
    <property type="entry name" value="WD40"/>
    <property type="match status" value="5"/>
</dbReference>
<dbReference type="SUPFAM" id="SSF50978">
    <property type="entry name" value="WD40 repeat-like"/>
    <property type="match status" value="1"/>
</dbReference>
<dbReference type="PROSITE" id="PS00678">
    <property type="entry name" value="WD_REPEATS_1"/>
    <property type="match status" value="1"/>
</dbReference>
<dbReference type="PROSITE" id="PS50082">
    <property type="entry name" value="WD_REPEATS_2"/>
    <property type="match status" value="2"/>
</dbReference>
<dbReference type="PROSITE" id="PS50294">
    <property type="entry name" value="WD_REPEATS_REGION"/>
    <property type="match status" value="1"/>
</dbReference>
<name>DDB2_ORYSJ</name>